<name>RL11_PROM0</name>
<reference key="1">
    <citation type="journal article" date="2007" name="PLoS Genet.">
        <title>Patterns and implications of gene gain and loss in the evolution of Prochlorococcus.</title>
        <authorList>
            <person name="Kettler G.C."/>
            <person name="Martiny A.C."/>
            <person name="Huang K."/>
            <person name="Zucker J."/>
            <person name="Coleman M.L."/>
            <person name="Rodrigue S."/>
            <person name="Chen F."/>
            <person name="Lapidus A."/>
            <person name="Ferriera S."/>
            <person name="Johnson J."/>
            <person name="Steglich C."/>
            <person name="Church G.M."/>
            <person name="Richardson P."/>
            <person name="Chisholm S.W."/>
        </authorList>
    </citation>
    <scope>NUCLEOTIDE SEQUENCE [LARGE SCALE GENOMIC DNA]</scope>
    <source>
        <strain>MIT 9301</strain>
    </source>
</reference>
<sequence length="141" mass="14715">MAKKIVAVIKLALQAGKANPAPPVGPALGQHGVNIMAFCKEYNARTQDKAGFVIPVEISVFEDRSFTFITKTPPASVLITKAAGIEKGSGESAKGSVGNISKAQLEEIAKTKLPDLNCSSVESAMKVIEGTARNMGVSITD</sequence>
<organism>
    <name type="scientific">Prochlorococcus marinus (strain MIT 9301)</name>
    <dbReference type="NCBI Taxonomy" id="167546"/>
    <lineage>
        <taxon>Bacteria</taxon>
        <taxon>Bacillati</taxon>
        <taxon>Cyanobacteriota</taxon>
        <taxon>Cyanophyceae</taxon>
        <taxon>Synechococcales</taxon>
        <taxon>Prochlorococcaceae</taxon>
        <taxon>Prochlorococcus</taxon>
    </lineage>
</organism>
<keyword id="KW-0488">Methylation</keyword>
<keyword id="KW-1185">Reference proteome</keyword>
<keyword id="KW-0687">Ribonucleoprotein</keyword>
<keyword id="KW-0689">Ribosomal protein</keyword>
<keyword id="KW-0694">RNA-binding</keyword>
<keyword id="KW-0699">rRNA-binding</keyword>
<dbReference type="EMBL" id="CP000576">
    <property type="protein sequence ID" value="ABO16847.1"/>
    <property type="molecule type" value="Genomic_DNA"/>
</dbReference>
<dbReference type="RefSeq" id="WP_002805232.1">
    <property type="nucleotide sequence ID" value="NC_009091.1"/>
</dbReference>
<dbReference type="SMR" id="A3PAS2"/>
<dbReference type="STRING" id="167546.P9301_02241"/>
<dbReference type="KEGG" id="pmg:P9301_02241"/>
<dbReference type="eggNOG" id="COG0080">
    <property type="taxonomic scope" value="Bacteria"/>
</dbReference>
<dbReference type="HOGENOM" id="CLU_074237_2_1_3"/>
<dbReference type="OrthoDB" id="9802408at2"/>
<dbReference type="Proteomes" id="UP000001430">
    <property type="component" value="Chromosome"/>
</dbReference>
<dbReference type="GO" id="GO:0022625">
    <property type="term" value="C:cytosolic large ribosomal subunit"/>
    <property type="evidence" value="ECO:0007669"/>
    <property type="project" value="TreeGrafter"/>
</dbReference>
<dbReference type="GO" id="GO:0070180">
    <property type="term" value="F:large ribosomal subunit rRNA binding"/>
    <property type="evidence" value="ECO:0007669"/>
    <property type="project" value="UniProtKB-UniRule"/>
</dbReference>
<dbReference type="GO" id="GO:0003735">
    <property type="term" value="F:structural constituent of ribosome"/>
    <property type="evidence" value="ECO:0007669"/>
    <property type="project" value="InterPro"/>
</dbReference>
<dbReference type="GO" id="GO:0006412">
    <property type="term" value="P:translation"/>
    <property type="evidence" value="ECO:0007669"/>
    <property type="project" value="UniProtKB-UniRule"/>
</dbReference>
<dbReference type="CDD" id="cd00349">
    <property type="entry name" value="Ribosomal_L11"/>
    <property type="match status" value="1"/>
</dbReference>
<dbReference type="FunFam" id="1.10.10.250:FF:000001">
    <property type="entry name" value="50S ribosomal protein L11"/>
    <property type="match status" value="1"/>
</dbReference>
<dbReference type="FunFam" id="3.30.1550.10:FF:000001">
    <property type="entry name" value="50S ribosomal protein L11"/>
    <property type="match status" value="1"/>
</dbReference>
<dbReference type="Gene3D" id="1.10.10.250">
    <property type="entry name" value="Ribosomal protein L11, C-terminal domain"/>
    <property type="match status" value="1"/>
</dbReference>
<dbReference type="Gene3D" id="3.30.1550.10">
    <property type="entry name" value="Ribosomal protein L11/L12, N-terminal domain"/>
    <property type="match status" value="1"/>
</dbReference>
<dbReference type="HAMAP" id="MF_00736">
    <property type="entry name" value="Ribosomal_uL11"/>
    <property type="match status" value="1"/>
</dbReference>
<dbReference type="InterPro" id="IPR000911">
    <property type="entry name" value="Ribosomal_uL11"/>
</dbReference>
<dbReference type="InterPro" id="IPR006519">
    <property type="entry name" value="Ribosomal_uL11_bac-typ"/>
</dbReference>
<dbReference type="InterPro" id="IPR020783">
    <property type="entry name" value="Ribosomal_uL11_C"/>
</dbReference>
<dbReference type="InterPro" id="IPR036769">
    <property type="entry name" value="Ribosomal_uL11_C_sf"/>
</dbReference>
<dbReference type="InterPro" id="IPR020785">
    <property type="entry name" value="Ribosomal_uL11_CS"/>
</dbReference>
<dbReference type="InterPro" id="IPR020784">
    <property type="entry name" value="Ribosomal_uL11_N"/>
</dbReference>
<dbReference type="InterPro" id="IPR036796">
    <property type="entry name" value="Ribosomal_uL11_N_sf"/>
</dbReference>
<dbReference type="NCBIfam" id="TIGR01632">
    <property type="entry name" value="L11_bact"/>
    <property type="match status" value="1"/>
</dbReference>
<dbReference type="PANTHER" id="PTHR11661">
    <property type="entry name" value="60S RIBOSOMAL PROTEIN L12"/>
    <property type="match status" value="1"/>
</dbReference>
<dbReference type="PANTHER" id="PTHR11661:SF1">
    <property type="entry name" value="LARGE RIBOSOMAL SUBUNIT PROTEIN UL11M"/>
    <property type="match status" value="1"/>
</dbReference>
<dbReference type="Pfam" id="PF00298">
    <property type="entry name" value="Ribosomal_L11"/>
    <property type="match status" value="1"/>
</dbReference>
<dbReference type="Pfam" id="PF03946">
    <property type="entry name" value="Ribosomal_L11_N"/>
    <property type="match status" value="1"/>
</dbReference>
<dbReference type="SMART" id="SM00649">
    <property type="entry name" value="RL11"/>
    <property type="match status" value="1"/>
</dbReference>
<dbReference type="SUPFAM" id="SSF54747">
    <property type="entry name" value="Ribosomal L11/L12e N-terminal domain"/>
    <property type="match status" value="1"/>
</dbReference>
<dbReference type="SUPFAM" id="SSF46906">
    <property type="entry name" value="Ribosomal protein L11, C-terminal domain"/>
    <property type="match status" value="1"/>
</dbReference>
<dbReference type="PROSITE" id="PS00359">
    <property type="entry name" value="RIBOSOMAL_L11"/>
    <property type="match status" value="1"/>
</dbReference>
<comment type="function">
    <text evidence="1">Forms part of the ribosomal stalk which helps the ribosome interact with GTP-bound translation factors.</text>
</comment>
<comment type="subunit">
    <text evidence="1">Part of the ribosomal stalk of the 50S ribosomal subunit. Interacts with L10 and the large rRNA to form the base of the stalk. L10 forms an elongated spine to which L12 dimers bind in a sequential fashion forming a multimeric L10(L12)X complex.</text>
</comment>
<comment type="PTM">
    <text evidence="1">One or more lysine residues are methylated.</text>
</comment>
<comment type="similarity">
    <text evidence="1">Belongs to the universal ribosomal protein uL11 family.</text>
</comment>
<accession>A3PAS2</accession>
<feature type="chain" id="PRO_1000046237" description="Large ribosomal subunit protein uL11">
    <location>
        <begin position="1"/>
        <end position="141"/>
    </location>
</feature>
<gene>
    <name evidence="1" type="primary">rplK</name>
    <name evidence="1" type="synonym">rpl11</name>
    <name type="ordered locus">P9301_02241</name>
</gene>
<protein>
    <recommendedName>
        <fullName evidence="1">Large ribosomal subunit protein uL11</fullName>
    </recommendedName>
    <alternativeName>
        <fullName evidence="2">50S ribosomal protein L11</fullName>
    </alternativeName>
</protein>
<evidence type="ECO:0000255" key="1">
    <source>
        <dbReference type="HAMAP-Rule" id="MF_00736"/>
    </source>
</evidence>
<evidence type="ECO:0000305" key="2"/>
<proteinExistence type="inferred from homology"/>